<name>SYGA_ECO5E</name>
<protein>
    <recommendedName>
        <fullName evidence="1">Glycine--tRNA ligase alpha subunit</fullName>
        <ecNumber evidence="1">6.1.1.14</ecNumber>
    </recommendedName>
    <alternativeName>
        <fullName evidence="1">Glycyl-tRNA synthetase alpha subunit</fullName>
        <shortName evidence="1">GlyRS</shortName>
    </alternativeName>
</protein>
<feature type="chain" id="PRO_1000101186" description="Glycine--tRNA ligase alpha subunit">
    <location>
        <begin position="1"/>
        <end position="303"/>
    </location>
</feature>
<organism>
    <name type="scientific">Escherichia coli O157:H7 (strain EC4115 / EHEC)</name>
    <dbReference type="NCBI Taxonomy" id="444450"/>
    <lineage>
        <taxon>Bacteria</taxon>
        <taxon>Pseudomonadati</taxon>
        <taxon>Pseudomonadota</taxon>
        <taxon>Gammaproteobacteria</taxon>
        <taxon>Enterobacterales</taxon>
        <taxon>Enterobacteriaceae</taxon>
        <taxon>Escherichia</taxon>
    </lineage>
</organism>
<evidence type="ECO:0000255" key="1">
    <source>
        <dbReference type="HAMAP-Rule" id="MF_00254"/>
    </source>
</evidence>
<accession>B5YVL2</accession>
<reference key="1">
    <citation type="journal article" date="2011" name="Proc. Natl. Acad. Sci. U.S.A.">
        <title>Genomic anatomy of Escherichia coli O157:H7 outbreaks.</title>
        <authorList>
            <person name="Eppinger M."/>
            <person name="Mammel M.K."/>
            <person name="Leclerc J.E."/>
            <person name="Ravel J."/>
            <person name="Cebula T.A."/>
        </authorList>
    </citation>
    <scope>NUCLEOTIDE SEQUENCE [LARGE SCALE GENOMIC DNA]</scope>
    <source>
        <strain>EC4115 / EHEC</strain>
    </source>
</reference>
<keyword id="KW-0030">Aminoacyl-tRNA synthetase</keyword>
<keyword id="KW-0067">ATP-binding</keyword>
<keyword id="KW-0963">Cytoplasm</keyword>
<keyword id="KW-0436">Ligase</keyword>
<keyword id="KW-0547">Nucleotide-binding</keyword>
<keyword id="KW-0648">Protein biosynthesis</keyword>
<sequence>MQKFDTRTFQGLILTLQDYWARQGCTIVQPLDMEVGAGTSHPMTCLRALGPEPMAAAYVQPSRRPTDGRYGENPNRLQHYYQFQVVIKPSPDNIQELYLGSLKELGMDPTIHDIRFVEDNWENPTLGAWGLGWEVWLNGMEVTQFTYFQQVGGLECKPVTGEITYGLERLAMYIQGVDSVYDLVWSDGPLGKTTYGDVFHQNEVEQSTYNFEYADVDFLFTCFEQYEKEAQQLLALENPLPLPAYERILKAAHSFNLLDARKAISVTERQRYILRIRTLTKAVAEAYYASREALGFPMCNKDK</sequence>
<comment type="catalytic activity">
    <reaction evidence="1">
        <text>tRNA(Gly) + glycine + ATP = glycyl-tRNA(Gly) + AMP + diphosphate</text>
        <dbReference type="Rhea" id="RHEA:16013"/>
        <dbReference type="Rhea" id="RHEA-COMP:9664"/>
        <dbReference type="Rhea" id="RHEA-COMP:9683"/>
        <dbReference type="ChEBI" id="CHEBI:30616"/>
        <dbReference type="ChEBI" id="CHEBI:33019"/>
        <dbReference type="ChEBI" id="CHEBI:57305"/>
        <dbReference type="ChEBI" id="CHEBI:78442"/>
        <dbReference type="ChEBI" id="CHEBI:78522"/>
        <dbReference type="ChEBI" id="CHEBI:456215"/>
        <dbReference type="EC" id="6.1.1.14"/>
    </reaction>
</comment>
<comment type="subunit">
    <text evidence="1">Tetramer of two alpha and two beta subunits.</text>
</comment>
<comment type="subcellular location">
    <subcellularLocation>
        <location evidence="1">Cytoplasm</location>
    </subcellularLocation>
</comment>
<comment type="similarity">
    <text evidence="1">Belongs to the class-II aminoacyl-tRNA synthetase family.</text>
</comment>
<gene>
    <name evidence="1" type="primary">glyQ</name>
    <name type="ordered locus">ECH74115_4935</name>
</gene>
<dbReference type="EC" id="6.1.1.14" evidence="1"/>
<dbReference type="EMBL" id="CP001164">
    <property type="protein sequence ID" value="ACI35203.1"/>
    <property type="molecule type" value="Genomic_DNA"/>
</dbReference>
<dbReference type="RefSeq" id="WP_001168544.1">
    <property type="nucleotide sequence ID" value="NC_011353.1"/>
</dbReference>
<dbReference type="SMR" id="B5YVL2"/>
<dbReference type="GeneID" id="93778290"/>
<dbReference type="KEGG" id="ecf:ECH74115_4935"/>
<dbReference type="HOGENOM" id="CLU_057066_1_0_6"/>
<dbReference type="GO" id="GO:0005829">
    <property type="term" value="C:cytosol"/>
    <property type="evidence" value="ECO:0007669"/>
    <property type="project" value="TreeGrafter"/>
</dbReference>
<dbReference type="GO" id="GO:0005524">
    <property type="term" value="F:ATP binding"/>
    <property type="evidence" value="ECO:0007669"/>
    <property type="project" value="UniProtKB-UniRule"/>
</dbReference>
<dbReference type="GO" id="GO:0004820">
    <property type="term" value="F:glycine-tRNA ligase activity"/>
    <property type="evidence" value="ECO:0007669"/>
    <property type="project" value="UniProtKB-UniRule"/>
</dbReference>
<dbReference type="GO" id="GO:0006426">
    <property type="term" value="P:glycyl-tRNA aminoacylation"/>
    <property type="evidence" value="ECO:0007669"/>
    <property type="project" value="UniProtKB-UniRule"/>
</dbReference>
<dbReference type="CDD" id="cd00733">
    <property type="entry name" value="GlyRS_alpha_core"/>
    <property type="match status" value="1"/>
</dbReference>
<dbReference type="FunFam" id="1.20.58.180:FF:000001">
    <property type="entry name" value="Glycine--tRNA ligase alpha subunit"/>
    <property type="match status" value="1"/>
</dbReference>
<dbReference type="FunFam" id="3.30.930.10:FF:000006">
    <property type="entry name" value="Glycine--tRNA ligase alpha subunit"/>
    <property type="match status" value="1"/>
</dbReference>
<dbReference type="Gene3D" id="3.30.930.10">
    <property type="entry name" value="Bira Bifunctional Protein, Domain 2"/>
    <property type="match status" value="1"/>
</dbReference>
<dbReference type="Gene3D" id="1.20.58.180">
    <property type="entry name" value="Class II aaRS and biotin synthetases, domain 2"/>
    <property type="match status" value="1"/>
</dbReference>
<dbReference type="HAMAP" id="MF_00254">
    <property type="entry name" value="Gly_tRNA_synth_alpha"/>
    <property type="match status" value="1"/>
</dbReference>
<dbReference type="InterPro" id="IPR045864">
    <property type="entry name" value="aa-tRNA-synth_II/BPL/LPL"/>
</dbReference>
<dbReference type="InterPro" id="IPR006194">
    <property type="entry name" value="Gly-tRNA-synth_heterodimer"/>
</dbReference>
<dbReference type="InterPro" id="IPR002310">
    <property type="entry name" value="Gly-tRNA_ligase_asu"/>
</dbReference>
<dbReference type="NCBIfam" id="TIGR00388">
    <property type="entry name" value="glyQ"/>
    <property type="match status" value="1"/>
</dbReference>
<dbReference type="NCBIfam" id="NF006827">
    <property type="entry name" value="PRK09348.1"/>
    <property type="match status" value="1"/>
</dbReference>
<dbReference type="PANTHER" id="PTHR30075:SF2">
    <property type="entry name" value="GLYCINE--TRNA LIGASE, CHLOROPLASTIC_MITOCHONDRIAL 2"/>
    <property type="match status" value="1"/>
</dbReference>
<dbReference type="PANTHER" id="PTHR30075">
    <property type="entry name" value="GLYCYL-TRNA SYNTHETASE"/>
    <property type="match status" value="1"/>
</dbReference>
<dbReference type="Pfam" id="PF02091">
    <property type="entry name" value="tRNA-synt_2e"/>
    <property type="match status" value="1"/>
</dbReference>
<dbReference type="PRINTS" id="PR01044">
    <property type="entry name" value="TRNASYNTHGA"/>
</dbReference>
<dbReference type="SUPFAM" id="SSF55681">
    <property type="entry name" value="Class II aaRS and biotin synthetases"/>
    <property type="match status" value="1"/>
</dbReference>
<dbReference type="PROSITE" id="PS50861">
    <property type="entry name" value="AA_TRNA_LIGASE_II_GLYAB"/>
    <property type="match status" value="1"/>
</dbReference>
<proteinExistence type="inferred from homology"/>